<proteinExistence type="evidence at protein level"/>
<comment type="function">
    <text evidence="1">DNA-dependent RNA polymerase catalyzes the transcription of DNA into RNA using the four ribonucleoside triphosphates as substrates. Second largest core component of RNA polymerase I which synthesizes ribosomal RNA precursors. Proposed to contribute to the polymerase catalytic activity and forms the polymerase active center together with the largest subunit. Pol I is composed of mobile elements and RPA2 is part of the core element with the central large cleft and probably a clamp element that moves to open and close the cleft (By similarity).</text>
</comment>
<comment type="catalytic activity">
    <reaction evidence="1">
        <text>RNA(n) + a ribonucleoside 5'-triphosphate = RNA(n+1) + diphosphate</text>
        <dbReference type="Rhea" id="RHEA:21248"/>
        <dbReference type="Rhea" id="RHEA-COMP:14527"/>
        <dbReference type="Rhea" id="RHEA-COMP:17342"/>
        <dbReference type="ChEBI" id="CHEBI:33019"/>
        <dbReference type="ChEBI" id="CHEBI:61557"/>
        <dbReference type="ChEBI" id="CHEBI:140395"/>
        <dbReference type="EC" id="2.7.7.6"/>
    </reaction>
    <physiologicalReaction direction="left-to-right" evidence="1">
        <dbReference type="Rhea" id="RHEA:21249"/>
    </physiologicalReaction>
</comment>
<comment type="subunit">
    <text evidence="1">Component of the RNA polymerase I (Pol I) complex consisting of 14 subunits.</text>
</comment>
<comment type="subcellular location">
    <subcellularLocation>
        <location evidence="1">Nucleus</location>
        <location evidence="1">Nucleolus</location>
    </subcellularLocation>
</comment>
<comment type="similarity">
    <text evidence="2">Belongs to the RNA polymerase beta chain family.</text>
</comment>
<keyword id="KW-0240">DNA-directed RNA polymerase</keyword>
<keyword id="KW-0479">Metal-binding</keyword>
<keyword id="KW-0548">Nucleotidyltransferase</keyword>
<keyword id="KW-0539">Nucleus</keyword>
<keyword id="KW-1185">Reference proteome</keyword>
<keyword id="KW-0804">Transcription</keyword>
<keyword id="KW-0808">Transferase</keyword>
<keyword id="KW-0862">Zinc</keyword>
<keyword id="KW-0863">Zinc-finger</keyword>
<gene>
    <name type="primary">acr-2</name>
    <name type="ORF">NCU08616</name>
</gene>
<accession>O74633</accession>
<accession>Q7RVL5</accession>
<reference key="1">
    <citation type="journal article" date="1998" name="Mol. Gen. Genet.">
        <title>Mutation of the gene for the second-largest subunit of RNA polymerase I prolongs the period length of the circadian conidiation rhythm in Neurospora crassa.</title>
        <authorList>
            <person name="Onai K."/>
            <person name="Katagiri S."/>
            <person name="Akiyama M."/>
            <person name="Nakashima H."/>
        </authorList>
    </citation>
    <scope>NUCLEOTIDE SEQUENCE [GENOMIC DNA]</scope>
    <source>
        <strain>UN-18</strain>
    </source>
</reference>
<reference key="2">
    <citation type="journal article" date="2003" name="Nature">
        <title>The genome sequence of the filamentous fungus Neurospora crassa.</title>
        <authorList>
            <person name="Galagan J.E."/>
            <person name="Calvo S.E."/>
            <person name="Borkovich K.A."/>
            <person name="Selker E.U."/>
            <person name="Read N.D."/>
            <person name="Jaffe D.B."/>
            <person name="FitzHugh W."/>
            <person name="Ma L.-J."/>
            <person name="Smirnov S."/>
            <person name="Purcell S."/>
            <person name="Rehman B."/>
            <person name="Elkins T."/>
            <person name="Engels R."/>
            <person name="Wang S."/>
            <person name="Nielsen C.B."/>
            <person name="Butler J."/>
            <person name="Endrizzi M."/>
            <person name="Qui D."/>
            <person name="Ianakiev P."/>
            <person name="Bell-Pedersen D."/>
            <person name="Nelson M.A."/>
            <person name="Werner-Washburne M."/>
            <person name="Selitrennikoff C.P."/>
            <person name="Kinsey J.A."/>
            <person name="Braun E.L."/>
            <person name="Zelter A."/>
            <person name="Schulte U."/>
            <person name="Kothe G.O."/>
            <person name="Jedd G."/>
            <person name="Mewes H.-W."/>
            <person name="Staben C."/>
            <person name="Marcotte E."/>
            <person name="Greenberg D."/>
            <person name="Roy A."/>
            <person name="Foley K."/>
            <person name="Naylor J."/>
            <person name="Stange-Thomann N."/>
            <person name="Barrett R."/>
            <person name="Gnerre S."/>
            <person name="Kamal M."/>
            <person name="Kamvysselis M."/>
            <person name="Mauceli E.W."/>
            <person name="Bielke C."/>
            <person name="Rudd S."/>
            <person name="Frishman D."/>
            <person name="Krystofova S."/>
            <person name="Rasmussen C."/>
            <person name="Metzenberg R.L."/>
            <person name="Perkins D.D."/>
            <person name="Kroken S."/>
            <person name="Cogoni C."/>
            <person name="Macino G."/>
            <person name="Catcheside D.E.A."/>
            <person name="Li W."/>
            <person name="Pratt R.J."/>
            <person name="Osmani S.A."/>
            <person name="DeSouza C.P.C."/>
            <person name="Glass N.L."/>
            <person name="Orbach M.J."/>
            <person name="Berglund J.A."/>
            <person name="Voelker R."/>
            <person name="Yarden O."/>
            <person name="Plamann M."/>
            <person name="Seiler S."/>
            <person name="Dunlap J.C."/>
            <person name="Radford A."/>
            <person name="Aramayo R."/>
            <person name="Natvig D.O."/>
            <person name="Alex L.A."/>
            <person name="Mannhaupt G."/>
            <person name="Ebbole D.J."/>
            <person name="Freitag M."/>
            <person name="Paulsen I."/>
            <person name="Sachs M.S."/>
            <person name="Lander E.S."/>
            <person name="Nusbaum C."/>
            <person name="Birren B.W."/>
        </authorList>
    </citation>
    <scope>NUCLEOTIDE SEQUENCE [LARGE SCALE GENOMIC DNA]</scope>
    <source>
        <strain>ATCC 24698 / 74-OR23-1A / CBS 708.71 / DSM 1257 / FGSC 987</strain>
    </source>
</reference>
<protein>
    <recommendedName>
        <fullName>DNA-directed RNA polymerase I subunit RPA2</fullName>
        <ecNumber evidence="1">2.7.7.6</ecNumber>
    </recommendedName>
    <alternativeName>
        <fullName>DNA-directed RNA polymerase I polypeptide 2</fullName>
        <shortName>RNA polymerase I subunit 2</shortName>
    </alternativeName>
</protein>
<sequence length="1234" mass="138601">MAPQQPQPTSQDWDVEFNQVRREKLFRDPPTDRTAYPALQAAVDPHIESFNALFRDDGKPSLLDHALAEIGTKTFLDGDERADPQGKNKLTIRYKSIELQKSQVPPTNRWAKNREIFPAECRERHVSYRGKLSATFEYRINDGEPHEFVRELGQMPIMVKSNKCHLQNNSPAQLVARKEESEELGGYFIVNGIEKLIRMLLVNRRNFPLAIVRPSFQNRGASYTPYGIIMRSVRPDETSQTNVLHYLSDGNVTFRFSWRKNEYLIPVMMIMKALVETNDREIFEGLVGPPQSKGVANTFLTDRVELLLRTYKKYGLYSKTQTRAYLGQKFRVVLGVPDTMSDYEVGTEFLRKIVLVHLGSQDVTEQQDADKFNMLLFMCRKLYALVAGDCAVDNPDAVQNQEILLGGFLYGQIIKERLEELLTVSFRASLRDYLRRNPTVSFQSDTFLKDFPIAIFRRANENIGQSLEYFLSTGNLVSPSGLDLQQVSGFTVVAEKLNFLRFISHFRMVHRGSFFAQLKTTTVRKLLPESWGFLCPVHTPDGSPCGLLNHLAHKCKIMTESVDASTISRLAFELGVVNISSAATSESVVVMLDGRIVGWCTPEECKSIAETLRYWKVNGENGVPLQLEIGYVPPSNGGSYPGLYMSSQPARMVRPVKYLPLQKEDFVGPQEQPYMSIACTEQEVIPGDSTHVEFDPTNILSILANMTPFSDFNQSPRNMYQCQMGKQTMGTPATALAHRTDNKMYRLQTGQTPVVRAPLHNTYGFDNFPNGMNAVVAVISYTGYDMDDAMILNKSAHERGFGHGSIYKTKKVSLKDDSRTRSAKSIVKMFGFAPNSTIRESTRDMLDNDGLPRVGRLLREGDVICAWHTVSADYNGQLVNRDGVTHYERYKDSEDAFVEEVRVIGADNGTEPLQTVSIKLRIPRSPVIGDKFSSRHGQKGVLSQKWPATDMPFSETGIQPDVIINPHAFPSRMTIGMFVESLAGKAGALHGLAQDSTPFKFDEQNTAGDYFGHQLMKAGYNYHGNEPLYSGITGEEFQADIYIGVVYYQRLRHMVNDKYQVRTTGPVVPTTGQPIKGRKKGGGIRVGEMERDALLAHGTSFLLQDRLLNCSDYSKSWMCRQCGSFLSTQPTVSPFIGKRKAVSTVRCRNCAVRLDDMEDVDLMQIDGEIWEDGSGTQWIGGENTTIVAVPGALKYLDVELAAMGIKLKYKVDKKDEIRRGQLVGKKAGDLMLTA</sequence>
<evidence type="ECO:0000250" key="1">
    <source>
        <dbReference type="UniProtKB" id="P22138"/>
    </source>
</evidence>
<evidence type="ECO:0000305" key="2"/>
<name>RPA2_NEUCR</name>
<feature type="chain" id="PRO_0000048078" description="DNA-directed RNA polymerase I subunit RPA2">
    <location>
        <begin position="1"/>
        <end position="1234"/>
    </location>
</feature>
<feature type="zinc finger region" description="C4-type" evidence="1">
    <location>
        <begin position="1119"/>
        <end position="1150"/>
    </location>
</feature>
<feature type="mutagenesis site" description="In un-18; shows a TS phenotype with respect to both mycelial growth and the period length of the conidiation rhythm.">
    <original>G</original>
    <variation>D</variation>
    <location>
        <position position="976"/>
    </location>
</feature>
<feature type="sequence conflict" description="In Ref. 1; BAA33445." evidence="2" ref="1">
    <original>GVANTF</original>
    <variation>ASPTPS</variation>
    <location>
        <begin position="294"/>
        <end position="299"/>
    </location>
</feature>
<dbReference type="EC" id="2.7.7.6" evidence="1"/>
<dbReference type="EMBL" id="AB006052">
    <property type="protein sequence ID" value="BAA33445.1"/>
    <property type="molecule type" value="Genomic_DNA"/>
</dbReference>
<dbReference type="EMBL" id="CM002236">
    <property type="protein sequence ID" value="EAA35588.1"/>
    <property type="molecule type" value="Genomic_DNA"/>
</dbReference>
<dbReference type="PIR" id="T30515">
    <property type="entry name" value="T30515"/>
</dbReference>
<dbReference type="SMR" id="O74633"/>
<dbReference type="FunCoup" id="O74633">
    <property type="interactions" value="911"/>
</dbReference>
<dbReference type="STRING" id="367110.O74633"/>
<dbReference type="PaxDb" id="5141-EFNCRP00000008643"/>
<dbReference type="EnsemblFungi" id="EAA35588">
    <property type="protein sequence ID" value="EAA35588"/>
    <property type="gene ID" value="NCU08616"/>
</dbReference>
<dbReference type="KEGG" id="ncr:NCU08616"/>
<dbReference type="VEuPathDB" id="FungiDB:NCU08616"/>
<dbReference type="HOGENOM" id="CLU_000524_5_1_1"/>
<dbReference type="InParanoid" id="O74633"/>
<dbReference type="OMA" id="FFGVVHY"/>
<dbReference type="OrthoDB" id="10248617at2759"/>
<dbReference type="Proteomes" id="UP000001805">
    <property type="component" value="Chromosome 1, Linkage Group I"/>
</dbReference>
<dbReference type="GO" id="GO:0005739">
    <property type="term" value="C:mitochondrion"/>
    <property type="evidence" value="ECO:0007669"/>
    <property type="project" value="GOC"/>
</dbReference>
<dbReference type="GO" id="GO:0005736">
    <property type="term" value="C:RNA polymerase I complex"/>
    <property type="evidence" value="ECO:0000318"/>
    <property type="project" value="GO_Central"/>
</dbReference>
<dbReference type="GO" id="GO:0003677">
    <property type="term" value="F:DNA binding"/>
    <property type="evidence" value="ECO:0007669"/>
    <property type="project" value="InterPro"/>
</dbReference>
<dbReference type="GO" id="GO:0003899">
    <property type="term" value="F:DNA-directed RNA polymerase activity"/>
    <property type="evidence" value="ECO:0007669"/>
    <property type="project" value="UniProtKB-EC"/>
</dbReference>
<dbReference type="GO" id="GO:0032549">
    <property type="term" value="F:ribonucleoside binding"/>
    <property type="evidence" value="ECO:0007669"/>
    <property type="project" value="InterPro"/>
</dbReference>
<dbReference type="GO" id="GO:0008270">
    <property type="term" value="F:zinc ion binding"/>
    <property type="evidence" value="ECO:0007669"/>
    <property type="project" value="UniProtKB-KW"/>
</dbReference>
<dbReference type="GO" id="GO:0006363">
    <property type="term" value="P:termination of RNA polymerase I transcription"/>
    <property type="evidence" value="ECO:0007669"/>
    <property type="project" value="EnsemblFungi"/>
</dbReference>
<dbReference type="GO" id="GO:0006362">
    <property type="term" value="P:transcription elongation by RNA polymerase I"/>
    <property type="evidence" value="ECO:0007669"/>
    <property type="project" value="EnsemblFungi"/>
</dbReference>
<dbReference type="GO" id="GO:0006361">
    <property type="term" value="P:transcription initiation at RNA polymerase I promoter"/>
    <property type="evidence" value="ECO:0007669"/>
    <property type="project" value="EnsemblFungi"/>
</dbReference>
<dbReference type="CDD" id="cd00653">
    <property type="entry name" value="RNA_pol_B_RPB2"/>
    <property type="match status" value="1"/>
</dbReference>
<dbReference type="FunFam" id="2.40.270.10:FF:000011">
    <property type="entry name" value="DNA-directed RNA polymerase subunit beta"/>
    <property type="match status" value="1"/>
</dbReference>
<dbReference type="FunFam" id="2.40.50.150:FF:000004">
    <property type="entry name" value="DNA-directed RNA polymerase subunit beta"/>
    <property type="match status" value="1"/>
</dbReference>
<dbReference type="FunFam" id="3.90.1070.20:FF:000003">
    <property type="entry name" value="DNA-directed RNA polymerase subunit beta"/>
    <property type="match status" value="1"/>
</dbReference>
<dbReference type="FunFam" id="3.90.1100.10:FF:000008">
    <property type="entry name" value="DNA-directed RNA polymerase subunit beta"/>
    <property type="match status" value="1"/>
</dbReference>
<dbReference type="FunFam" id="3.90.1110.10:FF:000007">
    <property type="entry name" value="DNA-directed RNA polymerase subunit beta"/>
    <property type="match status" value="1"/>
</dbReference>
<dbReference type="FunFam" id="3.90.1800.10:FF:000007">
    <property type="entry name" value="DNA-directed RNA polymerase subunit beta"/>
    <property type="match status" value="1"/>
</dbReference>
<dbReference type="Gene3D" id="2.40.50.150">
    <property type="match status" value="1"/>
</dbReference>
<dbReference type="Gene3D" id="3.90.1070.20">
    <property type="match status" value="1"/>
</dbReference>
<dbReference type="Gene3D" id="3.90.1100.10">
    <property type="match status" value="1"/>
</dbReference>
<dbReference type="Gene3D" id="2.40.270.10">
    <property type="entry name" value="DNA-directed RNA polymerase, subunit 2, domain 6"/>
    <property type="match status" value="1"/>
</dbReference>
<dbReference type="Gene3D" id="3.90.1800.10">
    <property type="entry name" value="RNA polymerase alpha subunit dimerisation domain"/>
    <property type="match status" value="1"/>
</dbReference>
<dbReference type="Gene3D" id="3.90.1110.10">
    <property type="entry name" value="RNA polymerase Rpb2, domain 2"/>
    <property type="match status" value="1"/>
</dbReference>
<dbReference type="InterPro" id="IPR015712">
    <property type="entry name" value="DNA-dir_RNA_pol_su2"/>
</dbReference>
<dbReference type="InterPro" id="IPR007120">
    <property type="entry name" value="DNA-dir_RNAP_su2_dom"/>
</dbReference>
<dbReference type="InterPro" id="IPR037033">
    <property type="entry name" value="DNA-dir_RNAP_su2_hyb_sf"/>
</dbReference>
<dbReference type="InterPro" id="IPR007121">
    <property type="entry name" value="RNA_pol_bsu_CS"/>
</dbReference>
<dbReference type="InterPro" id="IPR007644">
    <property type="entry name" value="RNA_pol_bsu_protrusion"/>
</dbReference>
<dbReference type="InterPro" id="IPR007642">
    <property type="entry name" value="RNA_pol_Rpb2_2"/>
</dbReference>
<dbReference type="InterPro" id="IPR037034">
    <property type="entry name" value="RNA_pol_Rpb2_2_sf"/>
</dbReference>
<dbReference type="InterPro" id="IPR007645">
    <property type="entry name" value="RNA_pol_Rpb2_3"/>
</dbReference>
<dbReference type="InterPro" id="IPR007641">
    <property type="entry name" value="RNA_pol_Rpb2_7"/>
</dbReference>
<dbReference type="InterPro" id="IPR014724">
    <property type="entry name" value="RNA_pol_RPB2_OB-fold"/>
</dbReference>
<dbReference type="InterPro" id="IPR009674">
    <property type="entry name" value="Rpa2_dom_4"/>
</dbReference>
<dbReference type="PANTHER" id="PTHR20856">
    <property type="entry name" value="DNA-DIRECTED RNA POLYMERASE I SUBUNIT 2"/>
    <property type="match status" value="1"/>
</dbReference>
<dbReference type="Pfam" id="PF06883">
    <property type="entry name" value="RNA_pol_Rpa2_4"/>
    <property type="match status" value="1"/>
</dbReference>
<dbReference type="Pfam" id="PF04563">
    <property type="entry name" value="RNA_pol_Rpb2_1"/>
    <property type="match status" value="1"/>
</dbReference>
<dbReference type="Pfam" id="PF04561">
    <property type="entry name" value="RNA_pol_Rpb2_2"/>
    <property type="match status" value="1"/>
</dbReference>
<dbReference type="Pfam" id="PF04565">
    <property type="entry name" value="RNA_pol_Rpb2_3"/>
    <property type="match status" value="1"/>
</dbReference>
<dbReference type="Pfam" id="PF00562">
    <property type="entry name" value="RNA_pol_Rpb2_6"/>
    <property type="match status" value="1"/>
</dbReference>
<dbReference type="Pfam" id="PF04560">
    <property type="entry name" value="RNA_pol_Rpb2_7"/>
    <property type="match status" value="1"/>
</dbReference>
<dbReference type="SUPFAM" id="SSF64484">
    <property type="entry name" value="beta and beta-prime subunits of DNA dependent RNA-polymerase"/>
    <property type="match status" value="1"/>
</dbReference>
<dbReference type="PROSITE" id="PS01166">
    <property type="entry name" value="RNA_POL_BETA"/>
    <property type="match status" value="1"/>
</dbReference>
<organism>
    <name type="scientific">Neurospora crassa (strain ATCC 24698 / 74-OR23-1A / CBS 708.71 / DSM 1257 / FGSC 987)</name>
    <dbReference type="NCBI Taxonomy" id="367110"/>
    <lineage>
        <taxon>Eukaryota</taxon>
        <taxon>Fungi</taxon>
        <taxon>Dikarya</taxon>
        <taxon>Ascomycota</taxon>
        <taxon>Pezizomycotina</taxon>
        <taxon>Sordariomycetes</taxon>
        <taxon>Sordariomycetidae</taxon>
        <taxon>Sordariales</taxon>
        <taxon>Sordariaceae</taxon>
        <taxon>Neurospora</taxon>
    </lineage>
</organism>